<organism>
    <name type="scientific">Photorhabdus laumondii subsp. laumondii (strain DSM 15139 / CIP 105565 / TT01)</name>
    <name type="common">Photorhabdus luminescens subsp. laumondii</name>
    <dbReference type="NCBI Taxonomy" id="243265"/>
    <lineage>
        <taxon>Bacteria</taxon>
        <taxon>Pseudomonadati</taxon>
        <taxon>Pseudomonadota</taxon>
        <taxon>Gammaproteobacteria</taxon>
        <taxon>Enterobacterales</taxon>
        <taxon>Morganellaceae</taxon>
        <taxon>Photorhabdus</taxon>
    </lineage>
</organism>
<name>APAH_PHOLL</name>
<dbReference type="EC" id="3.6.1.41" evidence="1"/>
<dbReference type="EMBL" id="BX571860">
    <property type="protein sequence ID" value="CAE12902.1"/>
    <property type="molecule type" value="Genomic_DNA"/>
</dbReference>
<dbReference type="SMR" id="Q7N8V9"/>
<dbReference type="STRING" id="243265.plu0607"/>
<dbReference type="KEGG" id="plu:plu0607"/>
<dbReference type="eggNOG" id="COG0639">
    <property type="taxonomic scope" value="Bacteria"/>
</dbReference>
<dbReference type="HOGENOM" id="CLU_056184_2_0_6"/>
<dbReference type="OrthoDB" id="9807890at2"/>
<dbReference type="Proteomes" id="UP000002514">
    <property type="component" value="Chromosome"/>
</dbReference>
<dbReference type="GO" id="GO:0008803">
    <property type="term" value="F:bis(5'-nucleosyl)-tetraphosphatase (symmetrical) activity"/>
    <property type="evidence" value="ECO:0007669"/>
    <property type="project" value="UniProtKB-UniRule"/>
</dbReference>
<dbReference type="CDD" id="cd07422">
    <property type="entry name" value="MPP_ApaH"/>
    <property type="match status" value="1"/>
</dbReference>
<dbReference type="FunFam" id="3.60.21.10:FF:000013">
    <property type="entry name" value="Bis(5'-nucleosyl)-tetraphosphatase, symmetrical"/>
    <property type="match status" value="1"/>
</dbReference>
<dbReference type="Gene3D" id="3.60.21.10">
    <property type="match status" value="1"/>
</dbReference>
<dbReference type="HAMAP" id="MF_00199">
    <property type="entry name" value="ApaH"/>
    <property type="match status" value="1"/>
</dbReference>
<dbReference type="InterPro" id="IPR004617">
    <property type="entry name" value="ApaH"/>
</dbReference>
<dbReference type="InterPro" id="IPR004843">
    <property type="entry name" value="Calcineurin-like_PHP_ApaH"/>
</dbReference>
<dbReference type="InterPro" id="IPR029052">
    <property type="entry name" value="Metallo-depent_PP-like"/>
</dbReference>
<dbReference type="NCBIfam" id="TIGR00668">
    <property type="entry name" value="apaH"/>
    <property type="match status" value="1"/>
</dbReference>
<dbReference type="NCBIfam" id="NF001204">
    <property type="entry name" value="PRK00166.1"/>
    <property type="match status" value="1"/>
</dbReference>
<dbReference type="PANTHER" id="PTHR40942">
    <property type="match status" value="1"/>
</dbReference>
<dbReference type="PANTHER" id="PTHR40942:SF4">
    <property type="entry name" value="CYTOCHROME C5"/>
    <property type="match status" value="1"/>
</dbReference>
<dbReference type="Pfam" id="PF00149">
    <property type="entry name" value="Metallophos"/>
    <property type="match status" value="1"/>
</dbReference>
<dbReference type="PIRSF" id="PIRSF000903">
    <property type="entry name" value="B5n-ttraPtase_sm"/>
    <property type="match status" value="1"/>
</dbReference>
<dbReference type="SUPFAM" id="SSF56300">
    <property type="entry name" value="Metallo-dependent phosphatases"/>
    <property type="match status" value="1"/>
</dbReference>
<sequence>MSTYLIGDIHGCYRELRALLTKANFDPTKDTLWLTGDLVARGPDSLKVLRYVKQLGSAARMVLGNHDLHLLGVYAGISRNKPKDKIDTLLSAPDADELINWLRKQPLLQFDDDLKLLMTHAGITPQWDLETAKMCASEVETMFNSSCYPLFLNSMYGDMPNNWSPELSGLARLRFSTNALTRMRYCFPNGQLDMLCKDKPENAPAPLKPWFELERQIPPEYAIVFGHWASLEGQGTPDSFYALDTGCCWGGQLTMLRWEDKQYFTQSSLPAVKQH</sequence>
<reference key="1">
    <citation type="journal article" date="2003" name="Nat. Biotechnol.">
        <title>The genome sequence of the entomopathogenic bacterium Photorhabdus luminescens.</title>
        <authorList>
            <person name="Duchaud E."/>
            <person name="Rusniok C."/>
            <person name="Frangeul L."/>
            <person name="Buchrieser C."/>
            <person name="Givaudan A."/>
            <person name="Taourit S."/>
            <person name="Bocs S."/>
            <person name="Boursaux-Eude C."/>
            <person name="Chandler M."/>
            <person name="Charles J.-F."/>
            <person name="Dassa E."/>
            <person name="Derose R."/>
            <person name="Derzelle S."/>
            <person name="Freyssinet G."/>
            <person name="Gaudriault S."/>
            <person name="Medigue C."/>
            <person name="Lanois A."/>
            <person name="Powell K."/>
            <person name="Siguier P."/>
            <person name="Vincent R."/>
            <person name="Wingate V."/>
            <person name="Zouine M."/>
            <person name="Glaser P."/>
            <person name="Boemare N."/>
            <person name="Danchin A."/>
            <person name="Kunst F."/>
        </authorList>
    </citation>
    <scope>NUCLEOTIDE SEQUENCE [LARGE SCALE GENOMIC DNA]</scope>
    <source>
        <strain>DSM 15139 / CIP 105565 / TT01</strain>
    </source>
</reference>
<gene>
    <name evidence="1" type="primary">apaH</name>
    <name type="ordered locus">plu0607</name>
</gene>
<keyword id="KW-0378">Hydrolase</keyword>
<keyword id="KW-1185">Reference proteome</keyword>
<protein>
    <recommendedName>
        <fullName evidence="1">Bis(5'-nucleosyl)-tetraphosphatase, symmetrical</fullName>
        <ecNumber evidence="1">3.6.1.41</ecNumber>
    </recommendedName>
    <alternativeName>
        <fullName evidence="1">Ap4A hydrolase</fullName>
    </alternativeName>
    <alternativeName>
        <fullName evidence="1">Diadenosine 5',5'''-P1,P4-tetraphosphate pyrophosphohydrolase</fullName>
    </alternativeName>
    <alternativeName>
        <fullName evidence="1">Diadenosine tetraphosphatase</fullName>
    </alternativeName>
</protein>
<feature type="chain" id="PRO_0000198002" description="Bis(5'-nucleosyl)-tetraphosphatase, symmetrical">
    <location>
        <begin position="1"/>
        <end position="275"/>
    </location>
</feature>
<proteinExistence type="inferred from homology"/>
<comment type="function">
    <text evidence="1">Hydrolyzes diadenosine 5',5'''-P1,P4-tetraphosphate to yield ADP.</text>
</comment>
<comment type="catalytic activity">
    <reaction evidence="1">
        <text>P(1),P(4)-bis(5'-adenosyl) tetraphosphate + H2O = 2 ADP + 2 H(+)</text>
        <dbReference type="Rhea" id="RHEA:24252"/>
        <dbReference type="ChEBI" id="CHEBI:15377"/>
        <dbReference type="ChEBI" id="CHEBI:15378"/>
        <dbReference type="ChEBI" id="CHEBI:58141"/>
        <dbReference type="ChEBI" id="CHEBI:456216"/>
        <dbReference type="EC" id="3.6.1.41"/>
    </reaction>
</comment>
<comment type="similarity">
    <text evidence="1">Belongs to the Ap4A hydrolase family.</text>
</comment>
<accession>Q7N8V9</accession>
<evidence type="ECO:0000255" key="1">
    <source>
        <dbReference type="HAMAP-Rule" id="MF_00199"/>
    </source>
</evidence>